<dbReference type="EMBL" id="CP001108">
    <property type="protein sequence ID" value="ACF45344.1"/>
    <property type="molecule type" value="Genomic_DNA"/>
</dbReference>
<dbReference type="RefSeq" id="WP_012504881.1">
    <property type="nucleotide sequence ID" value="NC_011059.1"/>
</dbReference>
<dbReference type="SMR" id="B4S496"/>
<dbReference type="STRING" id="290512.Paes_0287"/>
<dbReference type="KEGG" id="paa:Paes_0287"/>
<dbReference type="eggNOG" id="COG0222">
    <property type="taxonomic scope" value="Bacteria"/>
</dbReference>
<dbReference type="HOGENOM" id="CLU_086499_3_2_10"/>
<dbReference type="Proteomes" id="UP000002725">
    <property type="component" value="Chromosome"/>
</dbReference>
<dbReference type="GO" id="GO:0022625">
    <property type="term" value="C:cytosolic large ribosomal subunit"/>
    <property type="evidence" value="ECO:0007669"/>
    <property type="project" value="TreeGrafter"/>
</dbReference>
<dbReference type="GO" id="GO:0003729">
    <property type="term" value="F:mRNA binding"/>
    <property type="evidence" value="ECO:0007669"/>
    <property type="project" value="TreeGrafter"/>
</dbReference>
<dbReference type="GO" id="GO:0003735">
    <property type="term" value="F:structural constituent of ribosome"/>
    <property type="evidence" value="ECO:0007669"/>
    <property type="project" value="InterPro"/>
</dbReference>
<dbReference type="GO" id="GO:0006412">
    <property type="term" value="P:translation"/>
    <property type="evidence" value="ECO:0007669"/>
    <property type="project" value="UniProtKB-UniRule"/>
</dbReference>
<dbReference type="CDD" id="cd00387">
    <property type="entry name" value="Ribosomal_L7_L12"/>
    <property type="match status" value="1"/>
</dbReference>
<dbReference type="FunFam" id="3.30.1390.10:FF:000001">
    <property type="entry name" value="50S ribosomal protein L7/L12"/>
    <property type="match status" value="1"/>
</dbReference>
<dbReference type="Gene3D" id="3.30.1390.10">
    <property type="match status" value="1"/>
</dbReference>
<dbReference type="Gene3D" id="1.20.5.710">
    <property type="entry name" value="Single helix bin"/>
    <property type="match status" value="1"/>
</dbReference>
<dbReference type="HAMAP" id="MF_00368">
    <property type="entry name" value="Ribosomal_bL12"/>
    <property type="match status" value="1"/>
</dbReference>
<dbReference type="InterPro" id="IPR000206">
    <property type="entry name" value="Ribosomal_bL12"/>
</dbReference>
<dbReference type="InterPro" id="IPR013823">
    <property type="entry name" value="Ribosomal_bL12_C"/>
</dbReference>
<dbReference type="InterPro" id="IPR014719">
    <property type="entry name" value="Ribosomal_bL12_C/ClpS-like"/>
</dbReference>
<dbReference type="InterPro" id="IPR008932">
    <property type="entry name" value="Ribosomal_bL12_oligo"/>
</dbReference>
<dbReference type="InterPro" id="IPR036235">
    <property type="entry name" value="Ribosomal_bL12_oligo_N_sf"/>
</dbReference>
<dbReference type="NCBIfam" id="TIGR00855">
    <property type="entry name" value="L12"/>
    <property type="match status" value="1"/>
</dbReference>
<dbReference type="PANTHER" id="PTHR45987">
    <property type="entry name" value="39S RIBOSOMAL PROTEIN L12"/>
    <property type="match status" value="1"/>
</dbReference>
<dbReference type="PANTHER" id="PTHR45987:SF4">
    <property type="entry name" value="LARGE RIBOSOMAL SUBUNIT PROTEIN BL12M"/>
    <property type="match status" value="1"/>
</dbReference>
<dbReference type="Pfam" id="PF00542">
    <property type="entry name" value="Ribosomal_L12"/>
    <property type="match status" value="1"/>
</dbReference>
<dbReference type="Pfam" id="PF16320">
    <property type="entry name" value="Ribosomal_L12_N"/>
    <property type="match status" value="1"/>
</dbReference>
<dbReference type="SUPFAM" id="SSF54736">
    <property type="entry name" value="ClpS-like"/>
    <property type="match status" value="1"/>
</dbReference>
<dbReference type="SUPFAM" id="SSF48300">
    <property type="entry name" value="Ribosomal protein L7/12, oligomerisation (N-terminal) domain"/>
    <property type="match status" value="1"/>
</dbReference>
<protein>
    <recommendedName>
        <fullName evidence="1">Large ribosomal subunit protein bL12</fullName>
    </recommendedName>
    <alternativeName>
        <fullName evidence="2">50S ribosomal protein L7/L12</fullName>
    </alternativeName>
</protein>
<reference key="1">
    <citation type="submission" date="2008-06" db="EMBL/GenBank/DDBJ databases">
        <title>Complete sequence of chromosome of Prosthecochloris aestuarii DSM 271.</title>
        <authorList>
            <consortium name="US DOE Joint Genome Institute"/>
            <person name="Lucas S."/>
            <person name="Copeland A."/>
            <person name="Lapidus A."/>
            <person name="Glavina del Rio T."/>
            <person name="Dalin E."/>
            <person name="Tice H."/>
            <person name="Bruce D."/>
            <person name="Goodwin L."/>
            <person name="Pitluck S."/>
            <person name="Schmutz J."/>
            <person name="Larimer F."/>
            <person name="Land M."/>
            <person name="Hauser L."/>
            <person name="Kyrpides N."/>
            <person name="Anderson I."/>
            <person name="Liu Z."/>
            <person name="Li T."/>
            <person name="Zhao F."/>
            <person name="Overmann J."/>
            <person name="Bryant D.A."/>
            <person name="Richardson P."/>
        </authorList>
    </citation>
    <scope>NUCLEOTIDE SEQUENCE [LARGE SCALE GENOMIC DNA]</scope>
    <source>
        <strain>DSM 271 / SK 413</strain>
    </source>
</reference>
<feature type="chain" id="PRO_1000121471" description="Large ribosomal subunit protein bL12">
    <location>
        <begin position="1"/>
        <end position="126"/>
    </location>
</feature>
<name>RL7_PROA2</name>
<sequence>MASIETLVEEIGKLSLTEASELVKALEEKFGVSAAPAVIAGGMAAAPAGDAAAQEEKTEFDVELKAAGANKINVIKVVRSITGLGLKEAKEVVDGAPKVVKEAVSKEEAEKIAKELKDAGAEVELK</sequence>
<comment type="function">
    <text evidence="1">Forms part of the ribosomal stalk which helps the ribosome interact with GTP-bound translation factors. Is thus essential for accurate translation.</text>
</comment>
<comment type="subunit">
    <text evidence="1">Homodimer. Part of the ribosomal stalk of the 50S ribosomal subunit. Forms a multimeric L10(L12)X complex, where L10 forms an elongated spine to which 2 to 4 L12 dimers bind in a sequential fashion. Binds GTP-bound translation factors.</text>
</comment>
<comment type="similarity">
    <text evidence="1">Belongs to the bacterial ribosomal protein bL12 family.</text>
</comment>
<proteinExistence type="inferred from homology"/>
<organism>
    <name type="scientific">Prosthecochloris aestuarii (strain DSM 271 / SK 413)</name>
    <dbReference type="NCBI Taxonomy" id="290512"/>
    <lineage>
        <taxon>Bacteria</taxon>
        <taxon>Pseudomonadati</taxon>
        <taxon>Chlorobiota</taxon>
        <taxon>Chlorobiia</taxon>
        <taxon>Chlorobiales</taxon>
        <taxon>Chlorobiaceae</taxon>
        <taxon>Prosthecochloris</taxon>
    </lineage>
</organism>
<keyword id="KW-0687">Ribonucleoprotein</keyword>
<keyword id="KW-0689">Ribosomal protein</keyword>
<accession>B4S496</accession>
<evidence type="ECO:0000255" key="1">
    <source>
        <dbReference type="HAMAP-Rule" id="MF_00368"/>
    </source>
</evidence>
<evidence type="ECO:0000305" key="2"/>
<gene>
    <name evidence="1" type="primary">rplL</name>
    <name type="ordered locus">Paes_0287</name>
</gene>